<comment type="function">
    <text evidence="3">Histones H1 are necessary for the condensation of nucleosome chains into higher-order structures.</text>
</comment>
<comment type="function">
    <text evidence="3">SAMP H1 has antibacterial activity against Gram-negative bacteria E.coli, A.salmonicida subsp salmonicida, V.anguillarum and S.typhimurium and Gram-positive bacteria B.subtilis and L.ivanovii.</text>
</comment>
<comment type="subcellular location">
    <subcellularLocation>
        <location>Nucleus</location>
    </subcellularLocation>
    <subcellularLocation>
        <location>Chromosome</location>
    </subcellularLocation>
</comment>
<comment type="subcellular location">
    <molecule>SAMP H1</molecule>
    <subcellularLocation>
        <location>Secreted</location>
    </subcellularLocation>
</comment>
<comment type="similarity">
    <text evidence="1">Belongs to the histone H1/H5 family.</text>
</comment>
<reference key="1">
    <citation type="journal article" date="2005" name="Antimicrob. Agents Chemother.">
        <title>Proline conformation-dependent antimicrobial activity of a proline-rich histone H1 N-terminal peptide fragment isolated from the skin mucus of Atlantic salmon.</title>
        <authorList>
            <person name="Luders T."/>
            <person name="Birkemo G.A."/>
            <person name="Nissen-Meyer J."/>
            <person name="Andersen O."/>
            <person name="Nes I.F."/>
        </authorList>
    </citation>
    <scope>NUCLEOTIDE SEQUENCE [GENOMIC DNA]</scope>
    <scope>PROTEIN SEQUENCE OF 2-31</scope>
    <scope>FUNCTION</scope>
    <scope>ACETYLATION AT ALA-2</scope>
    <source>
        <tissue>Skin mucus</tissue>
    </source>
</reference>
<proteinExistence type="evidence at protein level"/>
<evidence type="ECO:0000255" key="1">
    <source>
        <dbReference type="PROSITE-ProRule" id="PRU00837"/>
    </source>
</evidence>
<evidence type="ECO:0000256" key="2">
    <source>
        <dbReference type="SAM" id="MobiDB-lite"/>
    </source>
</evidence>
<evidence type="ECO:0000269" key="3">
    <source>
    </source>
</evidence>
<feature type="initiator methionine" description="Removed" evidence="3">
    <location>
        <position position="1"/>
    </location>
</feature>
<feature type="chain" id="PRO_0000013158" description="Histone H1">
    <location>
        <begin position="2"/>
        <end position="55" status="greater than"/>
    </location>
</feature>
<feature type="peptide" id="PRO_0000013159" description="SAMP H1">
    <location>
        <begin position="2"/>
        <end position="31"/>
    </location>
</feature>
<feature type="domain" description="H15" evidence="1">
    <location>
        <begin position="28"/>
        <end position="55"/>
    </location>
</feature>
<feature type="region of interest" description="Disordered" evidence="2">
    <location>
        <begin position="1"/>
        <end position="28"/>
    </location>
</feature>
<feature type="compositionally biased region" description="Low complexity" evidence="2">
    <location>
        <begin position="1"/>
        <end position="15"/>
    </location>
</feature>
<feature type="compositionally biased region" description="Basic residues" evidence="2">
    <location>
        <begin position="16"/>
        <end position="27"/>
    </location>
</feature>
<feature type="modified residue" description="N-acetylalanine" evidence="3">
    <location>
        <position position="2"/>
    </location>
</feature>
<feature type="non-terminal residue">
    <location>
        <position position="55"/>
    </location>
</feature>
<name>H1_SALSA</name>
<sequence>MAEVAPAPAAAAPAKAPKKKAAAKPKKAGPSVGELIVKAVSASKERSGVSLAALK</sequence>
<keyword id="KW-0007">Acetylation</keyword>
<keyword id="KW-0044">Antibiotic</keyword>
<keyword id="KW-0929">Antimicrobial</keyword>
<keyword id="KW-0158">Chromosome</keyword>
<keyword id="KW-0903">Direct protein sequencing</keyword>
<keyword id="KW-0238">DNA-binding</keyword>
<keyword id="KW-0539">Nucleus</keyword>
<keyword id="KW-1185">Reference proteome</keyword>
<keyword id="KW-0964">Secreted</keyword>
<protein>
    <recommendedName>
        <fullName>Histone H1</fullName>
    </recommendedName>
    <component>
        <recommendedName>
            <fullName>SAMP H1</fullName>
        </recommendedName>
    </component>
</protein>
<organism>
    <name type="scientific">Salmo salar</name>
    <name type="common">Atlantic salmon</name>
    <dbReference type="NCBI Taxonomy" id="8030"/>
    <lineage>
        <taxon>Eukaryota</taxon>
        <taxon>Metazoa</taxon>
        <taxon>Chordata</taxon>
        <taxon>Craniata</taxon>
        <taxon>Vertebrata</taxon>
        <taxon>Euteleostomi</taxon>
        <taxon>Actinopterygii</taxon>
        <taxon>Neopterygii</taxon>
        <taxon>Teleostei</taxon>
        <taxon>Protacanthopterygii</taxon>
        <taxon>Salmoniformes</taxon>
        <taxon>Salmonidae</taxon>
        <taxon>Salmoninae</taxon>
        <taxon>Salmo</taxon>
    </lineage>
</organism>
<accession>P84408</accession>
<accession>Q5GMQ6</accession>
<dbReference type="EMBL" id="AJ877042">
    <property type="protein sequence ID" value="CAI46350.1"/>
    <property type="molecule type" value="Genomic_DNA"/>
</dbReference>
<dbReference type="SMR" id="P84408"/>
<dbReference type="iPTMnet" id="P84408"/>
<dbReference type="Proteomes" id="UP000087266">
    <property type="component" value="Unplaced"/>
</dbReference>
<dbReference type="GO" id="GO:0005576">
    <property type="term" value="C:extracellular region"/>
    <property type="evidence" value="ECO:0007669"/>
    <property type="project" value="UniProtKB-SubCell"/>
</dbReference>
<dbReference type="GO" id="GO:0000786">
    <property type="term" value="C:nucleosome"/>
    <property type="evidence" value="ECO:0007669"/>
    <property type="project" value="InterPro"/>
</dbReference>
<dbReference type="GO" id="GO:0005634">
    <property type="term" value="C:nucleus"/>
    <property type="evidence" value="ECO:0007669"/>
    <property type="project" value="UniProtKB-SubCell"/>
</dbReference>
<dbReference type="GO" id="GO:0003677">
    <property type="term" value="F:DNA binding"/>
    <property type="evidence" value="ECO:0007669"/>
    <property type="project" value="UniProtKB-KW"/>
</dbReference>
<dbReference type="GO" id="GO:0042742">
    <property type="term" value="P:defense response to bacterium"/>
    <property type="evidence" value="ECO:0000314"/>
    <property type="project" value="AgBase"/>
</dbReference>
<dbReference type="GO" id="GO:0006334">
    <property type="term" value="P:nucleosome assembly"/>
    <property type="evidence" value="ECO:0007669"/>
    <property type="project" value="InterPro"/>
</dbReference>
<dbReference type="Gene3D" id="1.10.10.10">
    <property type="entry name" value="Winged helix-like DNA-binding domain superfamily/Winged helix DNA-binding domain"/>
    <property type="match status" value="1"/>
</dbReference>
<dbReference type="InterPro" id="IPR005818">
    <property type="entry name" value="Histone_H1/H5_H15"/>
</dbReference>
<dbReference type="InterPro" id="IPR036388">
    <property type="entry name" value="WH-like_DNA-bd_sf"/>
</dbReference>
<dbReference type="Pfam" id="PF00538">
    <property type="entry name" value="Linker_histone"/>
    <property type="match status" value="1"/>
</dbReference>
<dbReference type="PROSITE" id="PS51504">
    <property type="entry name" value="H15"/>
    <property type="match status" value="1"/>
</dbReference>